<keyword id="KW-0158">Chromosome</keyword>
<keyword id="KW-0539">Nucleus</keyword>
<keyword id="KW-1185">Reference proteome</keyword>
<keyword id="KW-0779">Telomere</keyword>
<comment type="function">
    <text evidence="1 4">Component of the COMPASS (Set1C) complex that specifically mono-, di- and trimethylates histone H3 to form H3K4me1/2/3, which subsequently plays a role in telomere length maintenance and transcription elongation regulation (By similarity). Controls the production of several secondary metabolites, including colletochlorins, higginsianins and sclerosporide (PubMed:30924614). Plays a key role in mycelial growth, sporulation, spore germination and virulence (PubMed:30924614).</text>
</comment>
<comment type="subunit">
    <text evidence="1">Component of the COMPASS complex.</text>
</comment>
<comment type="subcellular location">
    <subcellularLocation>
        <location evidence="6">Nucleus</location>
    </subcellularLocation>
    <subcellularLocation>
        <location evidence="6">Chromosome</location>
        <location evidence="6">Telomere</location>
    </subcellularLocation>
</comment>
<comment type="disruption phenotype">
    <text evidence="4">Impairs tri- and dimethylation of H3K4 (PubMed:30924614). Impairs mycelial growth, sporulation and spore germination (PubMed:30924614). Impairs fungal virulence but not infection-related morphogenesis (PubMed:30924614). Leads to increased production of several secondary metabolites, including colletochlorins, higginsianins and sclerosporide (PubMed:30924614).</text>
</comment>
<comment type="similarity">
    <text evidence="6">Belongs to the cclA family.</text>
</comment>
<gene>
    <name evidence="5" type="primary">cclA</name>
    <name type="ORF">CH063_01108</name>
    <name type="ORF">CH63R_04661</name>
</gene>
<dbReference type="EMBL" id="CACQ02001079">
    <property type="protein sequence ID" value="CCF34268.1"/>
    <property type="molecule type" value="Genomic_DNA"/>
</dbReference>
<dbReference type="EMBL" id="CM004457">
    <property type="protein sequence ID" value="OBR12365.1"/>
    <property type="molecule type" value="Genomic_DNA"/>
</dbReference>
<dbReference type="RefSeq" id="XP_018160882.1">
    <property type="nucleotide sequence ID" value="XM_018299636.1"/>
</dbReference>
<dbReference type="SMR" id="H1V216"/>
<dbReference type="STRING" id="759273.H1V216"/>
<dbReference type="EnsemblFungi" id="CCF34268">
    <property type="protein sequence ID" value="CCF34268"/>
    <property type="gene ID" value="CH063_01108"/>
</dbReference>
<dbReference type="GeneID" id="28863743"/>
<dbReference type="KEGG" id="chig:CH63R_04661"/>
<dbReference type="VEuPathDB" id="FungiDB:CH63R_04661"/>
<dbReference type="eggNOG" id="KOG2626">
    <property type="taxonomic scope" value="Eukaryota"/>
</dbReference>
<dbReference type="HOGENOM" id="CLU_014420_3_0_1"/>
<dbReference type="OrthoDB" id="41256at1028384"/>
<dbReference type="Proteomes" id="UP000007174">
    <property type="component" value="Unassembled WGS sequence"/>
</dbReference>
<dbReference type="Proteomes" id="UP000092177">
    <property type="component" value="Chromosome 3"/>
</dbReference>
<dbReference type="GO" id="GO:0000781">
    <property type="term" value="C:chromosome, telomeric region"/>
    <property type="evidence" value="ECO:0007669"/>
    <property type="project" value="UniProtKB-SubCell"/>
</dbReference>
<dbReference type="GO" id="GO:0048189">
    <property type="term" value="C:Lid2 complex"/>
    <property type="evidence" value="ECO:0007669"/>
    <property type="project" value="EnsemblFungi"/>
</dbReference>
<dbReference type="GO" id="GO:0048188">
    <property type="term" value="C:Set1C/COMPASS complex"/>
    <property type="evidence" value="ECO:0007669"/>
    <property type="project" value="EnsemblFungi"/>
</dbReference>
<dbReference type="GO" id="GO:0000976">
    <property type="term" value="F:transcription cis-regulatory region binding"/>
    <property type="evidence" value="ECO:0007669"/>
    <property type="project" value="TreeGrafter"/>
</dbReference>
<dbReference type="GO" id="GO:0045814">
    <property type="term" value="P:negative regulation of gene expression, epigenetic"/>
    <property type="evidence" value="ECO:0007669"/>
    <property type="project" value="EnsemblFungi"/>
</dbReference>
<dbReference type="CDD" id="cd12872">
    <property type="entry name" value="SPRY_Ash2"/>
    <property type="match status" value="1"/>
</dbReference>
<dbReference type="Gene3D" id="2.60.120.920">
    <property type="match status" value="1"/>
</dbReference>
<dbReference type="InterPro" id="IPR037353">
    <property type="entry name" value="ASH2"/>
</dbReference>
<dbReference type="InterPro" id="IPR001870">
    <property type="entry name" value="B30.2/SPRY"/>
</dbReference>
<dbReference type="InterPro" id="IPR043136">
    <property type="entry name" value="B30.2/SPRY_sf"/>
</dbReference>
<dbReference type="InterPro" id="IPR013320">
    <property type="entry name" value="ConA-like_dom_sf"/>
</dbReference>
<dbReference type="InterPro" id="IPR003877">
    <property type="entry name" value="SPRY_dom"/>
</dbReference>
<dbReference type="PANTHER" id="PTHR10598">
    <property type="entry name" value="SET1/ASH2 HISTONE METHYLTRANSFERASE COMPLEX SUBUNIT ASH2"/>
    <property type="match status" value="1"/>
</dbReference>
<dbReference type="PANTHER" id="PTHR10598:SF0">
    <property type="entry name" value="SET1_ASH2 HISTONE METHYLTRANSFERASE COMPLEX SUBUNIT ASH2"/>
    <property type="match status" value="1"/>
</dbReference>
<dbReference type="SMART" id="SM00449">
    <property type="entry name" value="SPRY"/>
    <property type="match status" value="1"/>
</dbReference>
<dbReference type="SUPFAM" id="SSF49899">
    <property type="entry name" value="Concanavalin A-like lectins/glucanases"/>
    <property type="match status" value="1"/>
</dbReference>
<dbReference type="PROSITE" id="PS50188">
    <property type="entry name" value="B302_SPRY"/>
    <property type="match status" value="1"/>
</dbReference>
<sequence length="568" mass="63011">MASDSGTPPPPWEPTLSGSLPASTAIPLKRAALEEDFTPSVPSPLNPDVRSTPKPQGVDDMPAKRNKKESLKKRESKGAFGGDSNRGTPDPKHREPKQSDYSPMRYKLAPPKPSDFEPARPAVFTYHHDVPALDGGKIQFYETSEHVHNKKSYHYTHCIADPGFPSSLYYRGTEAEPHGPHLSFEDSATHLFFDQTGRHITTNKGFRMTRANVAIREGRFYWEVKITRGIVDKKNGEGQPESHGHVRMGFARREASVDAPVGFDAYSYGFRDVGGEKVYMSRPKPFFPEEEGIREGDVIGLEIQLPSERLQRKVLAGQYNPAVDTGLDDDSTAFDAPNIVRDRIPIRFKQHIYFEKIDYHTTKELEDLMNPSPVSSGPANSVEAPNPNHTVPALRTLPSSYIKVYKNGVLMGTPFTDLLAFLPPASKPQAQIGAREGLDNGMLGYYPAVSVFRGGAAEVNFGPDFWFPPPGIVEDPDNEVSMIDGGQDEPSKSYAFAYPGLDKIRPVSERYTEQIVEDIVYDIIDEVDFWIQDGCKVIDRFGQGEKAGHTGSLAASGRDEIKELVQDD</sequence>
<reference key="1">
    <citation type="journal article" date="2012" name="Nat. Genet.">
        <title>Lifestyle transitions in plant pathogenic Colletotrichum fungi deciphered by genome and transcriptome analyses.</title>
        <authorList>
            <person name="O'Connell R.J."/>
            <person name="Thon M.R."/>
            <person name="Hacquard S."/>
            <person name="Amyotte S.G."/>
            <person name="Kleemann J."/>
            <person name="Torres M.F."/>
            <person name="Damm U."/>
            <person name="Buiate E.A."/>
            <person name="Epstein L."/>
            <person name="Alkan N."/>
            <person name="Altmueller J."/>
            <person name="Alvarado-Balderrama L."/>
            <person name="Bauser C.A."/>
            <person name="Becker C."/>
            <person name="Birren B.W."/>
            <person name="Chen Z."/>
            <person name="Choi J."/>
            <person name="Crouch J.A."/>
            <person name="Duvick J.P."/>
            <person name="Farman M.A."/>
            <person name="Gan P."/>
            <person name="Heiman D."/>
            <person name="Henrissat B."/>
            <person name="Howard R.J."/>
            <person name="Kabbage M."/>
            <person name="Koch C."/>
            <person name="Kracher B."/>
            <person name="Kubo Y."/>
            <person name="Law A.D."/>
            <person name="Lebrun M.-H."/>
            <person name="Lee Y.-H."/>
            <person name="Miyara I."/>
            <person name="Moore N."/>
            <person name="Neumann U."/>
            <person name="Nordstroem K."/>
            <person name="Panaccione D.G."/>
            <person name="Panstruga R."/>
            <person name="Place M."/>
            <person name="Proctor R.H."/>
            <person name="Prusky D."/>
            <person name="Rech G."/>
            <person name="Reinhardt R."/>
            <person name="Rollins J.A."/>
            <person name="Rounsley S."/>
            <person name="Schardl C.L."/>
            <person name="Schwartz D.C."/>
            <person name="Shenoy N."/>
            <person name="Shirasu K."/>
            <person name="Sikhakolli U.R."/>
            <person name="Stueber K."/>
            <person name="Sukno S.A."/>
            <person name="Sweigard J.A."/>
            <person name="Takano Y."/>
            <person name="Takahara H."/>
            <person name="Trail F."/>
            <person name="van der Does H.C."/>
            <person name="Voll L.M."/>
            <person name="Will I."/>
            <person name="Young S."/>
            <person name="Zeng Q."/>
            <person name="Zhang J."/>
            <person name="Zhou S."/>
            <person name="Dickman M.B."/>
            <person name="Schulze-Lefert P."/>
            <person name="Ver Loren van Themaat E."/>
            <person name="Ma L.-J."/>
            <person name="Vaillancourt L.J."/>
        </authorList>
    </citation>
    <scope>NUCLEOTIDE SEQUENCE [LARGE SCALE GENOMIC DNA]</scope>
    <source>
        <strain>IMI 349063</strain>
    </source>
</reference>
<reference key="2">
    <citation type="journal article" date="2017" name="BMC Genomics">
        <title>Gapless genome assembly of Colletotrichum higginsianum reveals chromosome structure and association of transposable elements with secondary metabolite gene clusters.</title>
        <authorList>
            <person name="Dallery J.-F."/>
            <person name="Lapalu N."/>
            <person name="Zampounis A."/>
            <person name="Pigne S."/>
            <person name="Luyten I."/>
            <person name="Amselem J."/>
            <person name="Wittenberg A.H.J."/>
            <person name="Zhou S."/>
            <person name="de Queiroz M.V."/>
            <person name="Robin G.P."/>
            <person name="Auger A."/>
            <person name="Hainaut M."/>
            <person name="Henrissat B."/>
            <person name="Kim K.-T."/>
            <person name="Lee Y.-H."/>
            <person name="Lespinet O."/>
            <person name="Schwartz D.C."/>
            <person name="Thon M.R."/>
            <person name="O'Connell R.J."/>
        </authorList>
    </citation>
    <scope>NUCLEOTIDE SEQUENCE [LARGE SCALE GENOMIC DNA]</scope>
    <scope>GENOME REANNOTATION</scope>
    <source>
        <strain>IMI 349063</strain>
    </source>
</reference>
<reference key="3">
    <citation type="journal article" date="2019" name="Mol. Plant Pathol.">
        <title>H3K4 trimethylation by CclA regulates pathogenicity and the production of three families of terpenoid secondary metabolites in Colletotrichum higginsianum.</title>
        <authorList>
            <person name="Dallery J.F."/>
            <person name="Adelin E."/>
            <person name="Le Goff G."/>
            <person name="Pigne S."/>
            <person name="Auger A."/>
            <person name="Ouazzani J."/>
            <person name="O'Connell R.J."/>
        </authorList>
    </citation>
    <scope>FUNCTION</scope>
    <scope>DISRUPTION PHENOTYPE</scope>
</reference>
<proteinExistence type="inferred from homology"/>
<protein>
    <recommendedName>
        <fullName evidence="5">COMPASS component cclA</fullName>
    </recommendedName>
</protein>
<name>CCLA_COLHI</name>
<feature type="chain" id="PRO_0000458881" description="COMPASS component cclA">
    <location>
        <begin position="1"/>
        <end position="568"/>
    </location>
</feature>
<feature type="domain" description="B30.2/SPRY" evidence="2">
    <location>
        <begin position="160"/>
        <end position="353"/>
    </location>
</feature>
<feature type="region of interest" description="Disordered" evidence="3">
    <location>
        <begin position="1"/>
        <end position="113"/>
    </location>
</feature>
<feature type="compositionally biased region" description="Basic and acidic residues" evidence="3">
    <location>
        <begin position="68"/>
        <end position="77"/>
    </location>
</feature>
<feature type="compositionally biased region" description="Basic and acidic residues" evidence="3">
    <location>
        <begin position="89"/>
        <end position="98"/>
    </location>
</feature>
<evidence type="ECO:0000250" key="1">
    <source>
        <dbReference type="UniProtKB" id="P43132"/>
    </source>
</evidence>
<evidence type="ECO:0000255" key="2">
    <source>
        <dbReference type="PROSITE-ProRule" id="PRU00548"/>
    </source>
</evidence>
<evidence type="ECO:0000256" key="3">
    <source>
        <dbReference type="SAM" id="MobiDB-lite"/>
    </source>
</evidence>
<evidence type="ECO:0000269" key="4">
    <source>
    </source>
</evidence>
<evidence type="ECO:0000303" key="5">
    <source>
    </source>
</evidence>
<evidence type="ECO:0000305" key="6"/>
<accession>H1V216</accession>
<organism>
    <name type="scientific">Colletotrichum higginsianum (strain IMI 349063)</name>
    <name type="common">Crucifer anthracnose fungus</name>
    <dbReference type="NCBI Taxonomy" id="759273"/>
    <lineage>
        <taxon>Eukaryota</taxon>
        <taxon>Fungi</taxon>
        <taxon>Dikarya</taxon>
        <taxon>Ascomycota</taxon>
        <taxon>Pezizomycotina</taxon>
        <taxon>Sordariomycetes</taxon>
        <taxon>Hypocreomycetidae</taxon>
        <taxon>Glomerellales</taxon>
        <taxon>Glomerellaceae</taxon>
        <taxon>Colletotrichum</taxon>
        <taxon>Colletotrichum destructivum species complex</taxon>
    </lineage>
</organism>